<sequence>MDRQSYLSELKEPVMETQQIKETIEMISEENLDIRTITMGISLLDCVTGDLQTTADKVYAKIMAKAANLVPVADAISDEYGIPIVNKRISVTPVSLLAGADQNLDFRPIAQAMDRAAKDLGVDLIGGYTALVQNGSTPAETALMKSLPEVLDTTERVCASVNIGSTRSGLNMDAVKLMGTVVKEVAMRKPQNAMKLVVFCNAVEDNPFMAGAFWGISEGDVAINTGVSGPGVVERAIAAKPAASFEEICETIKQTAFKVSRMGQFVGKVAADRLDVPFNIVDLSLAPTPAKGDSVAQILETMGLSHVGTPGTTAALALLNDAVKKGGIMAAERVGGLSGAFIPVSEDANMITAAAKGQISLEKLEAMTAVCSVGLDMVAVPGDTPDATISGMIADEAAIGMINNKTTAVRVIPVPGKQVGDTVEFGGIFGTAPIMAINDGNAQQFINRGGRIPAPIHSFKN</sequence>
<gene>
    <name type="ordered locus">LCABL_10110</name>
</gene>
<accession>B3WCJ6</accession>
<proteinExistence type="inferred from homology"/>
<comment type="subunit">
    <text evidence="1">Homodimer.</text>
</comment>
<comment type="similarity">
    <text evidence="1">Belongs to the UPF0210 family.</text>
</comment>
<protein>
    <recommendedName>
        <fullName evidence="1">UPF0210 protein LCABL_10110</fullName>
    </recommendedName>
</protein>
<reference key="1">
    <citation type="submission" date="2008-06" db="EMBL/GenBank/DDBJ databases">
        <title>Lactobacillus casei BL23 complete genome sequence.</title>
        <authorList>
            <person name="Maze A."/>
            <person name="Boel G."/>
            <person name="Bourand A."/>
            <person name="Loux V."/>
            <person name="Gibrat J.F."/>
            <person name="Zuniga M."/>
            <person name="Hartke A."/>
            <person name="Deutscher J."/>
        </authorList>
    </citation>
    <scope>NUCLEOTIDE SEQUENCE [LARGE SCALE GENOMIC DNA]</scope>
    <source>
        <strain>BL23</strain>
    </source>
</reference>
<feature type="chain" id="PRO_1000139227" description="UPF0210 protein LCABL_10110">
    <location>
        <begin position="1"/>
        <end position="461"/>
    </location>
</feature>
<organism>
    <name type="scientific">Lacticaseibacillus casei (strain BL23)</name>
    <name type="common">Lactobacillus casei</name>
    <dbReference type="NCBI Taxonomy" id="543734"/>
    <lineage>
        <taxon>Bacteria</taxon>
        <taxon>Bacillati</taxon>
        <taxon>Bacillota</taxon>
        <taxon>Bacilli</taxon>
        <taxon>Lactobacillales</taxon>
        <taxon>Lactobacillaceae</taxon>
        <taxon>Lacticaseibacillus</taxon>
    </lineage>
</organism>
<name>Y1011_LACCB</name>
<evidence type="ECO:0000255" key="1">
    <source>
        <dbReference type="HAMAP-Rule" id="MF_01221"/>
    </source>
</evidence>
<dbReference type="EMBL" id="FM177140">
    <property type="protein sequence ID" value="CAQ66097.1"/>
    <property type="molecule type" value="Genomic_DNA"/>
</dbReference>
<dbReference type="SMR" id="B3WCJ6"/>
<dbReference type="KEGG" id="lcb:LCABL_10110"/>
<dbReference type="HOGENOM" id="CLU_048704_0_0_9"/>
<dbReference type="CDD" id="cd08025">
    <property type="entry name" value="RNR_PFL_like_DUF711"/>
    <property type="match status" value="1"/>
</dbReference>
<dbReference type="Gene3D" id="3.20.70.20">
    <property type="match status" value="1"/>
</dbReference>
<dbReference type="HAMAP" id="MF_01221">
    <property type="entry name" value="UPF0210"/>
    <property type="match status" value="1"/>
</dbReference>
<dbReference type="InterPro" id="IPR007841">
    <property type="entry name" value="UPF0210"/>
</dbReference>
<dbReference type="NCBIfam" id="NF003700">
    <property type="entry name" value="PRK05313.1"/>
    <property type="match status" value="1"/>
</dbReference>
<dbReference type="PANTHER" id="PTHR37560:SF1">
    <property type="entry name" value="UPF0210 PROTEIN MJ1665"/>
    <property type="match status" value="1"/>
</dbReference>
<dbReference type="PANTHER" id="PTHR37560">
    <property type="entry name" value="UPF0210 PROTEIN SPR0218"/>
    <property type="match status" value="1"/>
</dbReference>
<dbReference type="Pfam" id="PF05167">
    <property type="entry name" value="DUF711"/>
    <property type="match status" value="1"/>
</dbReference>
<dbReference type="SUPFAM" id="SSF51998">
    <property type="entry name" value="PFL-like glycyl radical enzymes"/>
    <property type="match status" value="1"/>
</dbReference>